<evidence type="ECO:0000255" key="1">
    <source>
        <dbReference type="HAMAP-Rule" id="MF_00127"/>
    </source>
</evidence>
<keyword id="KW-0030">Aminoacyl-tRNA synthetase</keyword>
<keyword id="KW-0067">ATP-binding</keyword>
<keyword id="KW-0963">Cytoplasm</keyword>
<keyword id="KW-0436">Ligase</keyword>
<keyword id="KW-0547">Nucleotide-binding</keyword>
<keyword id="KW-0648">Protein biosynthesis</keyword>
<keyword id="KW-1185">Reference proteome</keyword>
<dbReference type="EC" id="6.1.1.21" evidence="1"/>
<dbReference type="EMBL" id="CP001191">
    <property type="protein sequence ID" value="ACI53762.1"/>
    <property type="molecule type" value="Genomic_DNA"/>
</dbReference>
<dbReference type="RefSeq" id="WP_012556709.1">
    <property type="nucleotide sequence ID" value="NC_011369.1"/>
</dbReference>
<dbReference type="SMR" id="B5ZRD0"/>
<dbReference type="STRING" id="395492.Rleg2_0464"/>
<dbReference type="KEGG" id="rlt:Rleg2_0464"/>
<dbReference type="eggNOG" id="COG0124">
    <property type="taxonomic scope" value="Bacteria"/>
</dbReference>
<dbReference type="HOGENOM" id="CLU_025113_3_2_5"/>
<dbReference type="Proteomes" id="UP000008330">
    <property type="component" value="Chromosome"/>
</dbReference>
<dbReference type="GO" id="GO:0005737">
    <property type="term" value="C:cytoplasm"/>
    <property type="evidence" value="ECO:0007669"/>
    <property type="project" value="UniProtKB-SubCell"/>
</dbReference>
<dbReference type="GO" id="GO:0005524">
    <property type="term" value="F:ATP binding"/>
    <property type="evidence" value="ECO:0007669"/>
    <property type="project" value="UniProtKB-UniRule"/>
</dbReference>
<dbReference type="GO" id="GO:0004821">
    <property type="term" value="F:histidine-tRNA ligase activity"/>
    <property type="evidence" value="ECO:0007669"/>
    <property type="project" value="UniProtKB-UniRule"/>
</dbReference>
<dbReference type="GO" id="GO:0006427">
    <property type="term" value="P:histidyl-tRNA aminoacylation"/>
    <property type="evidence" value="ECO:0007669"/>
    <property type="project" value="UniProtKB-UniRule"/>
</dbReference>
<dbReference type="CDD" id="cd00773">
    <property type="entry name" value="HisRS-like_core"/>
    <property type="match status" value="1"/>
</dbReference>
<dbReference type="CDD" id="cd00859">
    <property type="entry name" value="HisRS_anticodon"/>
    <property type="match status" value="1"/>
</dbReference>
<dbReference type="Gene3D" id="3.40.50.800">
    <property type="entry name" value="Anticodon-binding domain"/>
    <property type="match status" value="1"/>
</dbReference>
<dbReference type="Gene3D" id="3.30.930.10">
    <property type="entry name" value="Bira Bifunctional Protein, Domain 2"/>
    <property type="match status" value="1"/>
</dbReference>
<dbReference type="HAMAP" id="MF_00127">
    <property type="entry name" value="His_tRNA_synth"/>
    <property type="match status" value="1"/>
</dbReference>
<dbReference type="InterPro" id="IPR006195">
    <property type="entry name" value="aa-tRNA-synth_II"/>
</dbReference>
<dbReference type="InterPro" id="IPR045864">
    <property type="entry name" value="aa-tRNA-synth_II/BPL/LPL"/>
</dbReference>
<dbReference type="InterPro" id="IPR004154">
    <property type="entry name" value="Anticodon-bd"/>
</dbReference>
<dbReference type="InterPro" id="IPR036621">
    <property type="entry name" value="Anticodon-bd_dom_sf"/>
</dbReference>
<dbReference type="InterPro" id="IPR015807">
    <property type="entry name" value="His-tRNA-ligase"/>
</dbReference>
<dbReference type="InterPro" id="IPR041715">
    <property type="entry name" value="HisRS-like_core"/>
</dbReference>
<dbReference type="InterPro" id="IPR004516">
    <property type="entry name" value="HisRS/HisZ"/>
</dbReference>
<dbReference type="InterPro" id="IPR033656">
    <property type="entry name" value="HisRS_anticodon"/>
</dbReference>
<dbReference type="NCBIfam" id="TIGR00442">
    <property type="entry name" value="hisS"/>
    <property type="match status" value="1"/>
</dbReference>
<dbReference type="PANTHER" id="PTHR11476:SF7">
    <property type="entry name" value="HISTIDINE--TRNA LIGASE"/>
    <property type="match status" value="1"/>
</dbReference>
<dbReference type="PANTHER" id="PTHR11476">
    <property type="entry name" value="HISTIDYL-TRNA SYNTHETASE"/>
    <property type="match status" value="1"/>
</dbReference>
<dbReference type="Pfam" id="PF03129">
    <property type="entry name" value="HGTP_anticodon"/>
    <property type="match status" value="1"/>
</dbReference>
<dbReference type="Pfam" id="PF13393">
    <property type="entry name" value="tRNA-synt_His"/>
    <property type="match status" value="1"/>
</dbReference>
<dbReference type="PIRSF" id="PIRSF001549">
    <property type="entry name" value="His-tRNA_synth"/>
    <property type="match status" value="1"/>
</dbReference>
<dbReference type="SUPFAM" id="SSF52954">
    <property type="entry name" value="Class II aaRS ABD-related"/>
    <property type="match status" value="1"/>
</dbReference>
<dbReference type="SUPFAM" id="SSF55681">
    <property type="entry name" value="Class II aaRS and biotin synthetases"/>
    <property type="match status" value="1"/>
</dbReference>
<dbReference type="PROSITE" id="PS50862">
    <property type="entry name" value="AA_TRNA_LIGASE_II"/>
    <property type="match status" value="1"/>
</dbReference>
<protein>
    <recommendedName>
        <fullName evidence="1">Histidine--tRNA ligase</fullName>
        <ecNumber evidence="1">6.1.1.21</ecNumber>
    </recommendedName>
    <alternativeName>
        <fullName evidence="1">Histidyl-tRNA synthetase</fullName>
        <shortName evidence="1">HisRS</shortName>
    </alternativeName>
</protein>
<sequence>MNDKQKKPQKLKARLPRGFVDRTAGDIRAVNEMTAKIREVYEHYGFDPLETPQFEYTDALGKFLPDSDRPNEGVFSLQDDDEQWMSLRYDLTAPLARHVAENFNEIQLPYRTYRAGYVFRNEKPGPGRFRQFMQFDADTVGAPGVQADAEMCMMMADTLEALGIKRGDYVVRVNNRKVLDGVLEAIGLGGDDKAGQRLNVLRAIDKLDKFGPEGVALLLGPGRKDESGDFTKGAGLDQAQIDKVLFFVGIKDYAESASRLAELVAGTSKGAEGVEELNFIGTLVASAGYGADRIKIDPSIVRGLEYYTGPVYEAELSFDVTNEKGEKVVFGSVGGGGRYDGLVSRFMGQPVPATGFSIGVSRLMTALKNLGKLGASEVIEPVLVTVMDGDVEAMGRYQKMTQDLRAAGIRAEMFQGNWKKFGNQLKYADRRGCPVAIIQGGDERATGVVQIKDLIEGKRLSGEIEDNASWREARVAQETVPEADLVAKVREILAAQAEDRKRAGGDV</sequence>
<feature type="chain" id="PRO_1000095582" description="Histidine--tRNA ligase">
    <location>
        <begin position="1"/>
        <end position="507"/>
    </location>
</feature>
<gene>
    <name evidence="1" type="primary">hisS</name>
    <name type="ordered locus">Rleg2_0464</name>
</gene>
<comment type="catalytic activity">
    <reaction evidence="1">
        <text>tRNA(His) + L-histidine + ATP = L-histidyl-tRNA(His) + AMP + diphosphate + H(+)</text>
        <dbReference type="Rhea" id="RHEA:17313"/>
        <dbReference type="Rhea" id="RHEA-COMP:9665"/>
        <dbReference type="Rhea" id="RHEA-COMP:9689"/>
        <dbReference type="ChEBI" id="CHEBI:15378"/>
        <dbReference type="ChEBI" id="CHEBI:30616"/>
        <dbReference type="ChEBI" id="CHEBI:33019"/>
        <dbReference type="ChEBI" id="CHEBI:57595"/>
        <dbReference type="ChEBI" id="CHEBI:78442"/>
        <dbReference type="ChEBI" id="CHEBI:78527"/>
        <dbReference type="ChEBI" id="CHEBI:456215"/>
        <dbReference type="EC" id="6.1.1.21"/>
    </reaction>
</comment>
<comment type="subunit">
    <text evidence="1">Homodimer.</text>
</comment>
<comment type="subcellular location">
    <subcellularLocation>
        <location evidence="1">Cytoplasm</location>
    </subcellularLocation>
</comment>
<comment type="similarity">
    <text evidence="1">Belongs to the class-II aminoacyl-tRNA synthetase family.</text>
</comment>
<accession>B5ZRD0</accession>
<proteinExistence type="inferred from homology"/>
<name>SYH_RHILW</name>
<reference key="1">
    <citation type="journal article" date="2010" name="Stand. Genomic Sci.">
        <title>Complete genome sequence of Rhizobium leguminosarum bv trifolii strain WSM2304, an effective microsymbiont of the South American clover Trifolium polymorphum.</title>
        <authorList>
            <person name="Reeve W."/>
            <person name="O'Hara G."/>
            <person name="Chain P."/>
            <person name="Ardley J."/>
            <person name="Brau L."/>
            <person name="Nandesena K."/>
            <person name="Tiwari R."/>
            <person name="Malfatti S."/>
            <person name="Kiss H."/>
            <person name="Lapidus A."/>
            <person name="Copeland A."/>
            <person name="Nolan M."/>
            <person name="Land M."/>
            <person name="Ivanova N."/>
            <person name="Mavromatis K."/>
            <person name="Markowitz V."/>
            <person name="Kyrpides N."/>
            <person name="Melino V."/>
            <person name="Denton M."/>
            <person name="Yates R."/>
            <person name="Howieson J."/>
        </authorList>
    </citation>
    <scope>NUCLEOTIDE SEQUENCE [LARGE SCALE GENOMIC DNA]</scope>
    <source>
        <strain>WSM2304</strain>
    </source>
</reference>
<organism>
    <name type="scientific">Rhizobium leguminosarum bv. trifolii (strain WSM2304)</name>
    <dbReference type="NCBI Taxonomy" id="395492"/>
    <lineage>
        <taxon>Bacteria</taxon>
        <taxon>Pseudomonadati</taxon>
        <taxon>Pseudomonadota</taxon>
        <taxon>Alphaproteobacteria</taxon>
        <taxon>Hyphomicrobiales</taxon>
        <taxon>Rhizobiaceae</taxon>
        <taxon>Rhizobium/Agrobacterium group</taxon>
        <taxon>Rhizobium</taxon>
    </lineage>
</organism>